<protein>
    <recommendedName>
        <fullName evidence="1">Phosphoadenosine 5'-phosphosulfate reductase</fullName>
        <shortName evidence="1">PAPS reductase</shortName>
        <ecNumber evidence="1">1.8.4.8</ecNumber>
    </recommendedName>
    <alternativeName>
        <fullName evidence="1">3'-phosphoadenylylsulfate reductase</fullName>
    </alternativeName>
    <alternativeName>
        <fullName evidence="1">PAPS reductase, thioredoxin dependent</fullName>
    </alternativeName>
    <alternativeName>
        <fullName evidence="1">PAPS sulfotransferase</fullName>
    </alternativeName>
    <alternativeName>
        <fullName evidence="1">PAdoPS reductase</fullName>
    </alternativeName>
</protein>
<feature type="chain" id="PRO_1000008937" description="Phosphoadenosine 5'-phosphosulfate reductase">
    <location>
        <begin position="1"/>
        <end position="244"/>
    </location>
</feature>
<feature type="active site" description="Nucleophile; cysteine thiosulfonate intermediate" evidence="1">
    <location>
        <position position="239"/>
    </location>
</feature>
<accession>Q32CG5</accession>
<proteinExistence type="inferred from homology"/>
<reference key="1">
    <citation type="journal article" date="2005" name="Nucleic Acids Res.">
        <title>Genome dynamics and diversity of Shigella species, the etiologic agents of bacillary dysentery.</title>
        <authorList>
            <person name="Yang F."/>
            <person name="Yang J."/>
            <person name="Zhang X."/>
            <person name="Chen L."/>
            <person name="Jiang Y."/>
            <person name="Yan Y."/>
            <person name="Tang X."/>
            <person name="Wang J."/>
            <person name="Xiong Z."/>
            <person name="Dong J."/>
            <person name="Xue Y."/>
            <person name="Zhu Y."/>
            <person name="Xu X."/>
            <person name="Sun L."/>
            <person name="Chen S."/>
            <person name="Nie H."/>
            <person name="Peng J."/>
            <person name="Xu J."/>
            <person name="Wang Y."/>
            <person name="Yuan Z."/>
            <person name="Wen Y."/>
            <person name="Yao Z."/>
            <person name="Shen Y."/>
            <person name="Qiang B."/>
            <person name="Hou Y."/>
            <person name="Yu J."/>
            <person name="Jin Q."/>
        </authorList>
    </citation>
    <scope>NUCLEOTIDE SEQUENCE [LARGE SCALE GENOMIC DNA]</scope>
    <source>
        <strain>Sd197</strain>
    </source>
</reference>
<sequence length="244" mass="27952">MSKLDLNALNELPKVDRILALAETNAQLEKLDAEGRVAWALDNLPGEYVLSSSFGIQAAVSLHLVNQICPDIPVILTDTGYLFPETYRFIDELTDKLKLNLKVYRATESAAWQEARYGKLWEQGVEGIEKYNDINKVEPMNRALKELNAQTWFAGLRREQSGSRANLPVLAIQRGVFKVLPIIDWDNRTIYQYLQKHGLKYHPLWDEGYLSVGDTHTTRKWEPSMAEEETRFFGLKRECGLHEG</sequence>
<gene>
    <name evidence="1" type="primary">cysH</name>
    <name type="ordered locus">SDY_2964</name>
</gene>
<comment type="function">
    <text evidence="1">Catalyzes the formation of sulfite from phosphoadenosine 5'-phosphosulfate (PAPS) using thioredoxin as an electron donor.</text>
</comment>
<comment type="catalytic activity">
    <reaction evidence="1">
        <text>[thioredoxin]-disulfide + sulfite + adenosine 3',5'-bisphosphate + 2 H(+) = [thioredoxin]-dithiol + 3'-phosphoadenylyl sulfate</text>
        <dbReference type="Rhea" id="RHEA:11724"/>
        <dbReference type="Rhea" id="RHEA-COMP:10698"/>
        <dbReference type="Rhea" id="RHEA-COMP:10700"/>
        <dbReference type="ChEBI" id="CHEBI:15378"/>
        <dbReference type="ChEBI" id="CHEBI:17359"/>
        <dbReference type="ChEBI" id="CHEBI:29950"/>
        <dbReference type="ChEBI" id="CHEBI:50058"/>
        <dbReference type="ChEBI" id="CHEBI:58339"/>
        <dbReference type="ChEBI" id="CHEBI:58343"/>
        <dbReference type="EC" id="1.8.4.8"/>
    </reaction>
</comment>
<comment type="pathway">
    <text evidence="1">Sulfur metabolism; hydrogen sulfide biosynthesis; sulfite from sulfate: step 3/3.</text>
</comment>
<comment type="subcellular location">
    <subcellularLocation>
        <location evidence="1">Cytoplasm</location>
    </subcellularLocation>
</comment>
<comment type="similarity">
    <text evidence="1">Belongs to the PAPS reductase family. CysH subfamily.</text>
</comment>
<keyword id="KW-0963">Cytoplasm</keyword>
<keyword id="KW-0560">Oxidoreductase</keyword>
<keyword id="KW-1185">Reference proteome</keyword>
<name>CYSH_SHIDS</name>
<evidence type="ECO:0000255" key="1">
    <source>
        <dbReference type="HAMAP-Rule" id="MF_00063"/>
    </source>
</evidence>
<organism>
    <name type="scientific">Shigella dysenteriae serotype 1 (strain Sd197)</name>
    <dbReference type="NCBI Taxonomy" id="300267"/>
    <lineage>
        <taxon>Bacteria</taxon>
        <taxon>Pseudomonadati</taxon>
        <taxon>Pseudomonadota</taxon>
        <taxon>Gammaproteobacteria</taxon>
        <taxon>Enterobacterales</taxon>
        <taxon>Enterobacteriaceae</taxon>
        <taxon>Shigella</taxon>
    </lineage>
</organism>
<dbReference type="EC" id="1.8.4.8" evidence="1"/>
<dbReference type="EMBL" id="CP000034">
    <property type="protein sequence ID" value="ABB62990.1"/>
    <property type="molecule type" value="Genomic_DNA"/>
</dbReference>
<dbReference type="RefSeq" id="WP_000039858.1">
    <property type="nucleotide sequence ID" value="NC_007606.1"/>
</dbReference>
<dbReference type="RefSeq" id="YP_404481.1">
    <property type="nucleotide sequence ID" value="NC_007606.1"/>
</dbReference>
<dbReference type="SMR" id="Q32CG5"/>
<dbReference type="STRING" id="300267.SDY_2964"/>
<dbReference type="EnsemblBacteria" id="ABB62990">
    <property type="protein sequence ID" value="ABB62990"/>
    <property type="gene ID" value="SDY_2964"/>
</dbReference>
<dbReference type="KEGG" id="sdy:SDY_2964"/>
<dbReference type="PATRIC" id="fig|300267.13.peg.3556"/>
<dbReference type="HOGENOM" id="CLU_044089_3_0_6"/>
<dbReference type="UniPathway" id="UPA00140">
    <property type="reaction ID" value="UER00206"/>
</dbReference>
<dbReference type="Proteomes" id="UP000002716">
    <property type="component" value="Chromosome"/>
</dbReference>
<dbReference type="GO" id="GO:0005737">
    <property type="term" value="C:cytoplasm"/>
    <property type="evidence" value="ECO:0007669"/>
    <property type="project" value="UniProtKB-SubCell"/>
</dbReference>
<dbReference type="GO" id="GO:0004604">
    <property type="term" value="F:phosphoadenylyl-sulfate reductase (thioredoxin) activity"/>
    <property type="evidence" value="ECO:0007669"/>
    <property type="project" value="UniProtKB-UniRule"/>
</dbReference>
<dbReference type="GO" id="GO:0070814">
    <property type="term" value="P:hydrogen sulfide biosynthetic process"/>
    <property type="evidence" value="ECO:0007669"/>
    <property type="project" value="UniProtKB-UniRule"/>
</dbReference>
<dbReference type="GO" id="GO:0019379">
    <property type="term" value="P:sulfate assimilation, phosphoadenylyl sulfate reduction by phosphoadenylyl-sulfate reductase (thioredoxin)"/>
    <property type="evidence" value="ECO:0007669"/>
    <property type="project" value="UniProtKB-UniRule"/>
</dbReference>
<dbReference type="CDD" id="cd23945">
    <property type="entry name" value="PAPS_reductase"/>
    <property type="match status" value="1"/>
</dbReference>
<dbReference type="FunFam" id="3.40.50.620:FF:000043">
    <property type="entry name" value="Phosphoadenosine phosphosulfate reductase"/>
    <property type="match status" value="1"/>
</dbReference>
<dbReference type="Gene3D" id="3.40.50.620">
    <property type="entry name" value="HUPs"/>
    <property type="match status" value="1"/>
</dbReference>
<dbReference type="HAMAP" id="MF_00063">
    <property type="entry name" value="CysH"/>
    <property type="match status" value="1"/>
</dbReference>
<dbReference type="InterPro" id="IPR004511">
    <property type="entry name" value="PAPS/APS_Rdtase"/>
</dbReference>
<dbReference type="InterPro" id="IPR002500">
    <property type="entry name" value="PAPS_reduct_dom"/>
</dbReference>
<dbReference type="InterPro" id="IPR011800">
    <property type="entry name" value="PAPS_reductase_CysH"/>
</dbReference>
<dbReference type="InterPro" id="IPR014729">
    <property type="entry name" value="Rossmann-like_a/b/a_fold"/>
</dbReference>
<dbReference type="NCBIfam" id="TIGR00434">
    <property type="entry name" value="cysH"/>
    <property type="match status" value="1"/>
</dbReference>
<dbReference type="NCBIfam" id="TIGR02057">
    <property type="entry name" value="PAPS_reductase"/>
    <property type="match status" value="1"/>
</dbReference>
<dbReference type="NCBIfam" id="NF002537">
    <property type="entry name" value="PRK02090.1"/>
    <property type="match status" value="1"/>
</dbReference>
<dbReference type="PANTHER" id="PTHR46509">
    <property type="entry name" value="PHOSPHOADENOSINE PHOSPHOSULFATE REDUCTASE"/>
    <property type="match status" value="1"/>
</dbReference>
<dbReference type="PANTHER" id="PTHR46509:SF1">
    <property type="entry name" value="PHOSPHOADENOSINE PHOSPHOSULFATE REDUCTASE"/>
    <property type="match status" value="1"/>
</dbReference>
<dbReference type="Pfam" id="PF01507">
    <property type="entry name" value="PAPS_reduct"/>
    <property type="match status" value="1"/>
</dbReference>
<dbReference type="PIRSF" id="PIRSF000857">
    <property type="entry name" value="PAPS_reductase"/>
    <property type="match status" value="1"/>
</dbReference>
<dbReference type="SUPFAM" id="SSF52402">
    <property type="entry name" value="Adenine nucleotide alpha hydrolases-like"/>
    <property type="match status" value="1"/>
</dbReference>